<accession>Q4A8X1</accession>
<gene>
    <name evidence="1" type="primary">obg</name>
    <name type="ordered locus">MHP7448_0041</name>
</gene>
<name>OBG_MESH7</name>
<evidence type="ECO:0000255" key="1">
    <source>
        <dbReference type="HAMAP-Rule" id="MF_01454"/>
    </source>
</evidence>
<evidence type="ECO:0000255" key="2">
    <source>
        <dbReference type="PROSITE-ProRule" id="PRU01229"/>
    </source>
</evidence>
<evidence type="ECO:0000255" key="3">
    <source>
        <dbReference type="PROSITE-ProRule" id="PRU01231"/>
    </source>
</evidence>
<reference key="1">
    <citation type="journal article" date="2005" name="J. Bacteriol.">
        <title>Swine and poultry pathogens: the complete genome sequences of two strains of Mycoplasma hyopneumoniae and a strain of Mycoplasma synoviae.</title>
        <authorList>
            <person name="Vasconcelos A.T.R."/>
            <person name="Ferreira H.B."/>
            <person name="Bizarro C.V."/>
            <person name="Bonatto S.L."/>
            <person name="Carvalho M.O."/>
            <person name="Pinto P.M."/>
            <person name="Almeida D.F."/>
            <person name="Almeida L.G.P."/>
            <person name="Almeida R."/>
            <person name="Alves-Junior L."/>
            <person name="Assuncao E.N."/>
            <person name="Azevedo V.A.C."/>
            <person name="Bogo M.R."/>
            <person name="Brigido M.M."/>
            <person name="Brocchi M."/>
            <person name="Burity H.A."/>
            <person name="Camargo A.A."/>
            <person name="Camargo S.S."/>
            <person name="Carepo M.S."/>
            <person name="Carraro D.M."/>
            <person name="de Mattos Cascardo J.C."/>
            <person name="Castro L.A."/>
            <person name="Cavalcanti G."/>
            <person name="Chemale G."/>
            <person name="Collevatti R.G."/>
            <person name="Cunha C.W."/>
            <person name="Dallagiovanna B."/>
            <person name="Dambros B.P."/>
            <person name="Dellagostin O.A."/>
            <person name="Falcao C."/>
            <person name="Fantinatti-Garboggini F."/>
            <person name="Felipe M.S.S."/>
            <person name="Fiorentin L."/>
            <person name="Franco G.R."/>
            <person name="Freitas N.S.A."/>
            <person name="Frias D."/>
            <person name="Grangeiro T.B."/>
            <person name="Grisard E.C."/>
            <person name="Guimaraes C.T."/>
            <person name="Hungria M."/>
            <person name="Jardim S.N."/>
            <person name="Krieger M.A."/>
            <person name="Laurino J.P."/>
            <person name="Lima L.F.A."/>
            <person name="Lopes M.I."/>
            <person name="Loreto E.L.S."/>
            <person name="Madeira H.M.F."/>
            <person name="Manfio G.P."/>
            <person name="Maranhao A.Q."/>
            <person name="Martinkovics C.T."/>
            <person name="Medeiros S.R.B."/>
            <person name="Moreira M.A.M."/>
            <person name="Neiva M."/>
            <person name="Ramalho-Neto C.E."/>
            <person name="Nicolas M.F."/>
            <person name="Oliveira S.C."/>
            <person name="Paixao R.F.C."/>
            <person name="Pedrosa F.O."/>
            <person name="Pena S.D.J."/>
            <person name="Pereira M."/>
            <person name="Pereira-Ferrari L."/>
            <person name="Piffer I."/>
            <person name="Pinto L.S."/>
            <person name="Potrich D.P."/>
            <person name="Salim A.C.M."/>
            <person name="Santos F.R."/>
            <person name="Schmitt R."/>
            <person name="Schneider M.P.C."/>
            <person name="Schrank A."/>
            <person name="Schrank I.S."/>
            <person name="Schuck A.F."/>
            <person name="Seuanez H.N."/>
            <person name="Silva D.W."/>
            <person name="Silva R."/>
            <person name="Silva S.C."/>
            <person name="Soares C.M.A."/>
            <person name="Souza K.R.L."/>
            <person name="Souza R.C."/>
            <person name="Staats C.C."/>
            <person name="Steffens M.B.R."/>
            <person name="Teixeira S.M.R."/>
            <person name="Urmenyi T.P."/>
            <person name="Vainstein M.H."/>
            <person name="Zuccherato L.W."/>
            <person name="Simpson A.J.G."/>
            <person name="Zaha A."/>
        </authorList>
    </citation>
    <scope>NUCLEOTIDE SEQUENCE [LARGE SCALE GENOMIC DNA]</scope>
    <source>
        <strain>7448</strain>
    </source>
</reference>
<organism>
    <name type="scientific">Mesomycoplasma hyopneumoniae (strain 7448)</name>
    <name type="common">Mycoplasma hyopneumoniae</name>
    <dbReference type="NCBI Taxonomy" id="262722"/>
    <lineage>
        <taxon>Bacteria</taxon>
        <taxon>Bacillati</taxon>
        <taxon>Mycoplasmatota</taxon>
        <taxon>Mycoplasmoidales</taxon>
        <taxon>Metamycoplasmataceae</taxon>
        <taxon>Mesomycoplasma</taxon>
    </lineage>
</organism>
<feature type="chain" id="PRO_0000386071" description="GTPase Obg">
    <location>
        <begin position="1"/>
        <end position="419"/>
    </location>
</feature>
<feature type="domain" description="Obg" evidence="3">
    <location>
        <begin position="1"/>
        <end position="156"/>
    </location>
</feature>
<feature type="domain" description="OBG-type G" evidence="1">
    <location>
        <begin position="157"/>
        <end position="334"/>
    </location>
</feature>
<feature type="domain" description="OCT" evidence="2">
    <location>
        <begin position="342"/>
        <end position="419"/>
    </location>
</feature>
<feature type="binding site" evidence="1">
    <location>
        <begin position="163"/>
        <end position="170"/>
    </location>
    <ligand>
        <name>GTP</name>
        <dbReference type="ChEBI" id="CHEBI:37565"/>
    </ligand>
</feature>
<feature type="binding site" evidence="1">
    <location>
        <position position="170"/>
    </location>
    <ligand>
        <name>Mg(2+)</name>
        <dbReference type="ChEBI" id="CHEBI:18420"/>
    </ligand>
</feature>
<feature type="binding site" evidence="1">
    <location>
        <begin position="188"/>
        <end position="192"/>
    </location>
    <ligand>
        <name>GTP</name>
        <dbReference type="ChEBI" id="CHEBI:37565"/>
    </ligand>
</feature>
<feature type="binding site" evidence="1">
    <location>
        <position position="190"/>
    </location>
    <ligand>
        <name>Mg(2+)</name>
        <dbReference type="ChEBI" id="CHEBI:18420"/>
    </ligand>
</feature>
<feature type="binding site" evidence="1">
    <location>
        <begin position="209"/>
        <end position="212"/>
    </location>
    <ligand>
        <name>GTP</name>
        <dbReference type="ChEBI" id="CHEBI:37565"/>
    </ligand>
</feature>
<feature type="binding site" evidence="1">
    <location>
        <begin position="278"/>
        <end position="281"/>
    </location>
    <ligand>
        <name>GTP</name>
        <dbReference type="ChEBI" id="CHEBI:37565"/>
    </ligand>
</feature>
<feature type="binding site" evidence="1">
    <location>
        <begin position="315"/>
        <end position="317"/>
    </location>
    <ligand>
        <name>GTP</name>
        <dbReference type="ChEBI" id="CHEBI:37565"/>
    </ligand>
</feature>
<keyword id="KW-0963">Cytoplasm</keyword>
<keyword id="KW-0342">GTP-binding</keyword>
<keyword id="KW-0378">Hydrolase</keyword>
<keyword id="KW-0460">Magnesium</keyword>
<keyword id="KW-0479">Metal-binding</keyword>
<keyword id="KW-0547">Nucleotide-binding</keyword>
<comment type="function">
    <text evidence="1">An essential GTPase which binds GTP, GDP and possibly (p)ppGpp with moderate affinity, with high nucleotide exchange rates and a fairly low GTP hydrolysis rate. Plays a role in control of the cell cycle, stress response, ribosome biogenesis and in those bacteria that undergo differentiation, in morphogenesis control.</text>
</comment>
<comment type="cofactor">
    <cofactor evidence="1">
        <name>Mg(2+)</name>
        <dbReference type="ChEBI" id="CHEBI:18420"/>
    </cofactor>
</comment>
<comment type="subunit">
    <text evidence="1">Monomer.</text>
</comment>
<comment type="subcellular location">
    <subcellularLocation>
        <location evidence="1">Cytoplasm</location>
    </subcellularLocation>
</comment>
<comment type="similarity">
    <text evidence="1">Belongs to the TRAFAC class OBG-HflX-like GTPase superfamily. OBG GTPase family.</text>
</comment>
<sequence length="419" mass="46916">MRFVDYVSIEVVAGKGGDGIISFRREAHVDKGGPDGGDGGWGGSIYFVGDSGMNTLLPFYQTKKIFGYNGENGRPKRQTGANGKDIFIKVPLGTQVFLKKSLICDIILEKKYLIAKGGRGGLGNFHFRNSKNKAPRISENGELGQNFYLDLQLKVMADIGLVGKPNAGKSTLLSLISNSKPKIANYEFTTLVPQLGVVKIYENSFVTADLPGLIQGASSGKGMGIIFLKHIERCRAIVHVIDFGSDNKNPIKDFIEIKSELEKFNKKLLDLNQIVIANKCDLPNFQFNLANFKRKFPKIKIIKSSLISAKQNEINIIKEKMFGLLGENQKKLEIQEINTSKIEFNLKAPFLIKSRNNGFFEITGELIQKIIQKIPLNSQENILRFNAKVKKIGLWDELIKKGIKPGDLVRIYEFEFHWN</sequence>
<protein>
    <recommendedName>
        <fullName evidence="1">GTPase Obg</fullName>
        <ecNumber evidence="1">3.6.5.-</ecNumber>
    </recommendedName>
    <alternativeName>
        <fullName evidence="1">GTP-binding protein Obg</fullName>
    </alternativeName>
</protein>
<proteinExistence type="inferred from homology"/>
<dbReference type="EC" id="3.6.5.-" evidence="1"/>
<dbReference type="EMBL" id="AE017244">
    <property type="protein sequence ID" value="AAZ53418.1"/>
    <property type="molecule type" value="Genomic_DNA"/>
</dbReference>
<dbReference type="RefSeq" id="WP_011289963.1">
    <property type="nucleotide sequence ID" value="NC_007332.1"/>
</dbReference>
<dbReference type="SMR" id="Q4A8X1"/>
<dbReference type="KEGG" id="mhp:MHP7448_0041"/>
<dbReference type="HOGENOM" id="CLU_011747_2_1_14"/>
<dbReference type="Proteomes" id="UP000000553">
    <property type="component" value="Chromosome"/>
</dbReference>
<dbReference type="GO" id="GO:0005737">
    <property type="term" value="C:cytoplasm"/>
    <property type="evidence" value="ECO:0007669"/>
    <property type="project" value="UniProtKB-SubCell"/>
</dbReference>
<dbReference type="GO" id="GO:0005525">
    <property type="term" value="F:GTP binding"/>
    <property type="evidence" value="ECO:0007669"/>
    <property type="project" value="UniProtKB-UniRule"/>
</dbReference>
<dbReference type="GO" id="GO:0003924">
    <property type="term" value="F:GTPase activity"/>
    <property type="evidence" value="ECO:0007669"/>
    <property type="project" value="UniProtKB-UniRule"/>
</dbReference>
<dbReference type="GO" id="GO:0000287">
    <property type="term" value="F:magnesium ion binding"/>
    <property type="evidence" value="ECO:0007669"/>
    <property type="project" value="InterPro"/>
</dbReference>
<dbReference type="GO" id="GO:0042254">
    <property type="term" value="P:ribosome biogenesis"/>
    <property type="evidence" value="ECO:0007669"/>
    <property type="project" value="UniProtKB-UniRule"/>
</dbReference>
<dbReference type="CDD" id="cd01898">
    <property type="entry name" value="Obg"/>
    <property type="match status" value="1"/>
</dbReference>
<dbReference type="FunFam" id="2.70.210.12:FF:000001">
    <property type="entry name" value="GTPase Obg"/>
    <property type="match status" value="1"/>
</dbReference>
<dbReference type="Gene3D" id="3.30.300.350">
    <property type="entry name" value="GTP-binding protein OBG, C-terminal domain"/>
    <property type="match status" value="1"/>
</dbReference>
<dbReference type="Gene3D" id="2.70.210.12">
    <property type="entry name" value="GTP1/OBG domain"/>
    <property type="match status" value="1"/>
</dbReference>
<dbReference type="Gene3D" id="3.40.50.300">
    <property type="entry name" value="P-loop containing nucleotide triphosphate hydrolases"/>
    <property type="match status" value="1"/>
</dbReference>
<dbReference type="HAMAP" id="MF_01454">
    <property type="entry name" value="GTPase_Obg"/>
    <property type="match status" value="1"/>
</dbReference>
<dbReference type="InterPro" id="IPR031167">
    <property type="entry name" value="G_OBG"/>
</dbReference>
<dbReference type="InterPro" id="IPR006073">
    <property type="entry name" value="GTP-bd"/>
</dbReference>
<dbReference type="InterPro" id="IPR014100">
    <property type="entry name" value="GTP-bd_Obg/CgtA"/>
</dbReference>
<dbReference type="InterPro" id="IPR036346">
    <property type="entry name" value="GTP-bd_prot_GTP1/OBG_C_sf"/>
</dbReference>
<dbReference type="InterPro" id="IPR006074">
    <property type="entry name" value="GTP1-OBG_CS"/>
</dbReference>
<dbReference type="InterPro" id="IPR006169">
    <property type="entry name" value="GTP1_OBG_dom"/>
</dbReference>
<dbReference type="InterPro" id="IPR036726">
    <property type="entry name" value="GTP1_OBG_dom_sf"/>
</dbReference>
<dbReference type="InterPro" id="IPR045086">
    <property type="entry name" value="OBG_GTPase"/>
</dbReference>
<dbReference type="InterPro" id="IPR015349">
    <property type="entry name" value="OCT_dom"/>
</dbReference>
<dbReference type="InterPro" id="IPR027417">
    <property type="entry name" value="P-loop_NTPase"/>
</dbReference>
<dbReference type="NCBIfam" id="TIGR02729">
    <property type="entry name" value="Obg_CgtA"/>
    <property type="match status" value="1"/>
</dbReference>
<dbReference type="NCBIfam" id="TIGR03595">
    <property type="entry name" value="Obg_CgtA_exten"/>
    <property type="match status" value="1"/>
</dbReference>
<dbReference type="NCBIfam" id="NF008955">
    <property type="entry name" value="PRK12297.1"/>
    <property type="match status" value="1"/>
</dbReference>
<dbReference type="NCBIfam" id="NF008956">
    <property type="entry name" value="PRK12299.1"/>
    <property type="match status" value="1"/>
</dbReference>
<dbReference type="PANTHER" id="PTHR11702">
    <property type="entry name" value="DEVELOPMENTALLY REGULATED GTP-BINDING PROTEIN-RELATED"/>
    <property type="match status" value="1"/>
</dbReference>
<dbReference type="PANTHER" id="PTHR11702:SF31">
    <property type="entry name" value="MITOCHONDRIAL RIBOSOME-ASSOCIATED GTPASE 2"/>
    <property type="match status" value="1"/>
</dbReference>
<dbReference type="Pfam" id="PF09269">
    <property type="entry name" value="DUF1967"/>
    <property type="match status" value="1"/>
</dbReference>
<dbReference type="Pfam" id="PF01018">
    <property type="entry name" value="GTP1_OBG"/>
    <property type="match status" value="1"/>
</dbReference>
<dbReference type="Pfam" id="PF01926">
    <property type="entry name" value="MMR_HSR1"/>
    <property type="match status" value="1"/>
</dbReference>
<dbReference type="PIRSF" id="PIRSF002401">
    <property type="entry name" value="GTP_bd_Obg/CgtA"/>
    <property type="match status" value="1"/>
</dbReference>
<dbReference type="PRINTS" id="PR00326">
    <property type="entry name" value="GTP1OBG"/>
</dbReference>
<dbReference type="SUPFAM" id="SSF102741">
    <property type="entry name" value="Obg GTP-binding protein C-terminal domain"/>
    <property type="match status" value="1"/>
</dbReference>
<dbReference type="SUPFAM" id="SSF82051">
    <property type="entry name" value="Obg GTP-binding protein N-terminal domain"/>
    <property type="match status" value="1"/>
</dbReference>
<dbReference type="SUPFAM" id="SSF52540">
    <property type="entry name" value="P-loop containing nucleoside triphosphate hydrolases"/>
    <property type="match status" value="1"/>
</dbReference>
<dbReference type="PROSITE" id="PS51710">
    <property type="entry name" value="G_OBG"/>
    <property type="match status" value="1"/>
</dbReference>
<dbReference type="PROSITE" id="PS00905">
    <property type="entry name" value="GTP1_OBG"/>
    <property type="match status" value="1"/>
</dbReference>
<dbReference type="PROSITE" id="PS51883">
    <property type="entry name" value="OBG"/>
    <property type="match status" value="1"/>
</dbReference>
<dbReference type="PROSITE" id="PS51881">
    <property type="entry name" value="OCT"/>
    <property type="match status" value="1"/>
</dbReference>